<gene>
    <name evidence="1" type="primary">rplL</name>
    <name type="ordered locus">Spro_0276</name>
</gene>
<dbReference type="EMBL" id="CP000826">
    <property type="protein sequence ID" value="ABV39386.1"/>
    <property type="molecule type" value="Genomic_DNA"/>
</dbReference>
<dbReference type="SMR" id="A8G8E6"/>
<dbReference type="STRING" id="399741.Spro_0276"/>
<dbReference type="KEGG" id="spe:Spro_0276"/>
<dbReference type="eggNOG" id="COG0222">
    <property type="taxonomic scope" value="Bacteria"/>
</dbReference>
<dbReference type="HOGENOM" id="CLU_086499_3_2_6"/>
<dbReference type="OrthoDB" id="9811748at2"/>
<dbReference type="GO" id="GO:0022625">
    <property type="term" value="C:cytosolic large ribosomal subunit"/>
    <property type="evidence" value="ECO:0007669"/>
    <property type="project" value="TreeGrafter"/>
</dbReference>
<dbReference type="GO" id="GO:0003729">
    <property type="term" value="F:mRNA binding"/>
    <property type="evidence" value="ECO:0007669"/>
    <property type="project" value="TreeGrafter"/>
</dbReference>
<dbReference type="GO" id="GO:0003735">
    <property type="term" value="F:structural constituent of ribosome"/>
    <property type="evidence" value="ECO:0007669"/>
    <property type="project" value="InterPro"/>
</dbReference>
<dbReference type="GO" id="GO:0006412">
    <property type="term" value="P:translation"/>
    <property type="evidence" value="ECO:0007669"/>
    <property type="project" value="UniProtKB-UniRule"/>
</dbReference>
<dbReference type="CDD" id="cd00387">
    <property type="entry name" value="Ribosomal_L7_L12"/>
    <property type="match status" value="1"/>
</dbReference>
<dbReference type="FunFam" id="3.30.1390.10:FF:000001">
    <property type="entry name" value="50S ribosomal protein L7/L12"/>
    <property type="match status" value="1"/>
</dbReference>
<dbReference type="Gene3D" id="3.30.1390.10">
    <property type="match status" value="1"/>
</dbReference>
<dbReference type="Gene3D" id="1.20.5.710">
    <property type="entry name" value="Single helix bin"/>
    <property type="match status" value="1"/>
</dbReference>
<dbReference type="HAMAP" id="MF_00368">
    <property type="entry name" value="Ribosomal_bL12"/>
    <property type="match status" value="1"/>
</dbReference>
<dbReference type="InterPro" id="IPR000206">
    <property type="entry name" value="Ribosomal_bL12"/>
</dbReference>
<dbReference type="InterPro" id="IPR013823">
    <property type="entry name" value="Ribosomal_bL12_C"/>
</dbReference>
<dbReference type="InterPro" id="IPR014719">
    <property type="entry name" value="Ribosomal_bL12_C/ClpS-like"/>
</dbReference>
<dbReference type="InterPro" id="IPR008932">
    <property type="entry name" value="Ribosomal_bL12_oligo"/>
</dbReference>
<dbReference type="InterPro" id="IPR036235">
    <property type="entry name" value="Ribosomal_bL12_oligo_N_sf"/>
</dbReference>
<dbReference type="NCBIfam" id="TIGR00855">
    <property type="entry name" value="L12"/>
    <property type="match status" value="1"/>
</dbReference>
<dbReference type="PANTHER" id="PTHR45987">
    <property type="entry name" value="39S RIBOSOMAL PROTEIN L12"/>
    <property type="match status" value="1"/>
</dbReference>
<dbReference type="PANTHER" id="PTHR45987:SF4">
    <property type="entry name" value="LARGE RIBOSOMAL SUBUNIT PROTEIN BL12M"/>
    <property type="match status" value="1"/>
</dbReference>
<dbReference type="Pfam" id="PF00542">
    <property type="entry name" value="Ribosomal_L12"/>
    <property type="match status" value="1"/>
</dbReference>
<dbReference type="Pfam" id="PF16320">
    <property type="entry name" value="Ribosomal_L12_N"/>
    <property type="match status" value="1"/>
</dbReference>
<dbReference type="SUPFAM" id="SSF54736">
    <property type="entry name" value="ClpS-like"/>
    <property type="match status" value="1"/>
</dbReference>
<dbReference type="SUPFAM" id="SSF48300">
    <property type="entry name" value="Ribosomal protein L7/12, oligomerisation (N-terminal) domain"/>
    <property type="match status" value="1"/>
</dbReference>
<feature type="chain" id="PRO_1000059928" description="Large ribosomal subunit protein bL12">
    <location>
        <begin position="1"/>
        <end position="121"/>
    </location>
</feature>
<protein>
    <recommendedName>
        <fullName evidence="1">Large ribosomal subunit protein bL12</fullName>
    </recommendedName>
    <alternativeName>
        <fullName evidence="2">50S ribosomal protein L7/L12</fullName>
    </alternativeName>
</protein>
<name>RL7_SERP5</name>
<reference key="1">
    <citation type="submission" date="2007-09" db="EMBL/GenBank/DDBJ databases">
        <title>Complete sequence of chromosome of Serratia proteamaculans 568.</title>
        <authorList>
            <consortium name="US DOE Joint Genome Institute"/>
            <person name="Copeland A."/>
            <person name="Lucas S."/>
            <person name="Lapidus A."/>
            <person name="Barry K."/>
            <person name="Glavina del Rio T."/>
            <person name="Dalin E."/>
            <person name="Tice H."/>
            <person name="Pitluck S."/>
            <person name="Chain P."/>
            <person name="Malfatti S."/>
            <person name="Shin M."/>
            <person name="Vergez L."/>
            <person name="Schmutz J."/>
            <person name="Larimer F."/>
            <person name="Land M."/>
            <person name="Hauser L."/>
            <person name="Kyrpides N."/>
            <person name="Kim E."/>
            <person name="Taghavi S."/>
            <person name="Newman L."/>
            <person name="Vangronsveld J."/>
            <person name="van der Lelie D."/>
            <person name="Richardson P."/>
        </authorList>
    </citation>
    <scope>NUCLEOTIDE SEQUENCE [LARGE SCALE GENOMIC DNA]</scope>
    <source>
        <strain>568</strain>
    </source>
</reference>
<evidence type="ECO:0000255" key="1">
    <source>
        <dbReference type="HAMAP-Rule" id="MF_00368"/>
    </source>
</evidence>
<evidence type="ECO:0000305" key="2"/>
<proteinExistence type="inferred from homology"/>
<organism>
    <name type="scientific">Serratia proteamaculans (strain 568)</name>
    <dbReference type="NCBI Taxonomy" id="399741"/>
    <lineage>
        <taxon>Bacteria</taxon>
        <taxon>Pseudomonadati</taxon>
        <taxon>Pseudomonadota</taxon>
        <taxon>Gammaproteobacteria</taxon>
        <taxon>Enterobacterales</taxon>
        <taxon>Yersiniaceae</taxon>
        <taxon>Serratia</taxon>
    </lineage>
</organism>
<keyword id="KW-0687">Ribonucleoprotein</keyword>
<keyword id="KW-0689">Ribosomal protein</keyword>
<comment type="function">
    <text evidence="1">Forms part of the ribosomal stalk which helps the ribosome interact with GTP-bound translation factors. Is thus essential for accurate translation.</text>
</comment>
<comment type="subunit">
    <text evidence="1">Homodimer. Part of the ribosomal stalk of the 50S ribosomal subunit. Forms a multimeric L10(L12)X complex, where L10 forms an elongated spine to which 2 to 4 L12 dimers bind in a sequential fashion. Binds GTP-bound translation factors.</text>
</comment>
<comment type="similarity">
    <text evidence="1">Belongs to the bacterial ribosomal protein bL12 family.</text>
</comment>
<sequence>MSITKDQIIEGVAALSVMEIVELIAAMEEKFGVSAAAVAAGPAAAAEAVEEKTEFDVVLKGIGANKVAVIKAVRGATGLGLKEAKDLVESAPAALKEGISKDDAEALKKALEEAGAEVEVK</sequence>
<accession>A8G8E6</accession>